<dbReference type="EMBL" id="AY150862">
    <property type="protein sequence ID" value="AAN15955.1"/>
    <property type="status" value="ALT_INIT"/>
    <property type="molecule type" value="mRNA"/>
</dbReference>
<dbReference type="EMBL" id="AY150863">
    <property type="protein sequence ID" value="AAN15956.1"/>
    <property type="status" value="ALT_INIT"/>
    <property type="molecule type" value="mRNA"/>
</dbReference>
<dbReference type="EMBL" id="AY150864">
    <property type="protein sequence ID" value="AAN15957.1"/>
    <property type="status" value="ALT_INIT"/>
    <property type="molecule type" value="mRNA"/>
</dbReference>
<dbReference type="EMBL" id="AE014298">
    <property type="protein sequence ID" value="AAF45375.2"/>
    <property type="molecule type" value="Genomic_DNA"/>
</dbReference>
<dbReference type="EMBL" id="AE014298">
    <property type="protein sequence ID" value="AAX52462.1"/>
    <property type="molecule type" value="Genomic_DNA"/>
</dbReference>
<dbReference type="EMBL" id="AE014298">
    <property type="protein sequence ID" value="AAX52463.1"/>
    <property type="molecule type" value="Genomic_DNA"/>
</dbReference>
<dbReference type="EMBL" id="AE014298">
    <property type="protein sequence ID" value="AAX52464.1"/>
    <property type="molecule type" value="Genomic_DNA"/>
</dbReference>
<dbReference type="EMBL" id="AE014298">
    <property type="protein sequence ID" value="AAZ52487.2"/>
    <property type="molecule type" value="Genomic_DNA"/>
</dbReference>
<dbReference type="EMBL" id="AE014298">
    <property type="protein sequence ID" value="AHN59947.1"/>
    <property type="molecule type" value="Genomic_DNA"/>
</dbReference>
<dbReference type="EMBL" id="BT015236">
    <property type="protein sequence ID" value="AAT94465.2"/>
    <property type="status" value="ALT_FRAME"/>
    <property type="molecule type" value="mRNA"/>
</dbReference>
<dbReference type="RefSeq" id="NP_001014757.2">
    <molecule id="Q8IS44-3"/>
    <property type="nucleotide sequence ID" value="NM_001014757.3"/>
</dbReference>
<dbReference type="RefSeq" id="NP_001014758.2">
    <molecule id="Q8IS44-1"/>
    <property type="nucleotide sequence ID" value="NM_001014758.3"/>
</dbReference>
<dbReference type="RefSeq" id="NP_001014759.1">
    <molecule id="Q8IS44-4"/>
    <property type="nucleotide sequence ID" value="NM_001014759.2"/>
</dbReference>
<dbReference type="RefSeq" id="NP_001014760.2">
    <molecule id="Q8IS44-6"/>
    <property type="nucleotide sequence ID" value="NM_001014760.3"/>
</dbReference>
<dbReference type="RefSeq" id="NP_001027080.2">
    <molecule id="Q8IS44-2"/>
    <property type="nucleotide sequence ID" value="NM_001031909.2"/>
</dbReference>
<dbReference type="RefSeq" id="NP_001285477.1">
    <molecule id="Q8IS44-5"/>
    <property type="nucleotide sequence ID" value="NM_001298548.1"/>
</dbReference>
<dbReference type="SMR" id="Q8IS44"/>
<dbReference type="BioGRID" id="59301">
    <property type="interactions" value="2"/>
</dbReference>
<dbReference type="FunCoup" id="Q8IS44">
    <property type="interactions" value="151"/>
</dbReference>
<dbReference type="STRING" id="7227.FBpp0309863"/>
<dbReference type="GlyCosmos" id="Q8IS44">
    <property type="glycosylation" value="8 sites, No reported glycans"/>
</dbReference>
<dbReference type="GlyGen" id="Q8IS44">
    <property type="glycosylation" value="9 sites"/>
</dbReference>
<dbReference type="PaxDb" id="7227-FBpp0099564"/>
<dbReference type="EnsemblMetazoa" id="FBtr0070034">
    <molecule id="Q8IS44-4"/>
    <property type="protein sequence ID" value="FBpp0099563"/>
    <property type="gene ID" value="FBgn0053517"/>
</dbReference>
<dbReference type="EnsemblMetazoa" id="FBtr0343167">
    <molecule id="Q8IS44-3"/>
    <property type="protein sequence ID" value="FBpp0309861"/>
    <property type="gene ID" value="FBgn0053517"/>
</dbReference>
<dbReference type="EnsemblMetazoa" id="FBtr0343168">
    <molecule id="Q8IS44-5"/>
    <property type="protein sequence ID" value="FBpp0309862"/>
    <property type="gene ID" value="FBgn0053517"/>
</dbReference>
<dbReference type="EnsemblMetazoa" id="FBtr0343169">
    <molecule id="Q8IS44-1"/>
    <property type="protein sequence ID" value="FBpp0309863"/>
    <property type="gene ID" value="FBgn0053517"/>
</dbReference>
<dbReference type="EnsemblMetazoa" id="FBtr0343170">
    <molecule id="Q8IS44-6"/>
    <property type="protein sequence ID" value="FBpp0309864"/>
    <property type="gene ID" value="FBgn0053517"/>
</dbReference>
<dbReference type="EnsemblMetazoa" id="FBtr0343171">
    <molecule id="Q8IS44-2"/>
    <property type="protein sequence ID" value="FBpp0309865"/>
    <property type="gene ID" value="FBgn0053517"/>
</dbReference>
<dbReference type="GeneID" id="33007"/>
<dbReference type="KEGG" id="dme:Dmel_CG33517"/>
<dbReference type="UCSC" id="CG33517-RE">
    <property type="organism name" value="d. melanogaster"/>
</dbReference>
<dbReference type="AGR" id="FB:FBgn0053517"/>
<dbReference type="CTD" id="33007"/>
<dbReference type="FlyBase" id="FBgn0053517">
    <property type="gene designation" value="Dop2R"/>
</dbReference>
<dbReference type="VEuPathDB" id="VectorBase:FBgn0053517"/>
<dbReference type="eggNOG" id="KOG3656">
    <property type="taxonomic scope" value="Eukaryota"/>
</dbReference>
<dbReference type="GeneTree" id="ENSGT00940000164988"/>
<dbReference type="InParanoid" id="Q8IS44"/>
<dbReference type="OMA" id="RTTHANV"/>
<dbReference type="OrthoDB" id="10010417at2759"/>
<dbReference type="PhylomeDB" id="Q8IS44"/>
<dbReference type="Reactome" id="R-DME-390651">
    <property type="pathway name" value="Dopamine receptors"/>
</dbReference>
<dbReference type="Reactome" id="R-DME-418594">
    <property type="pathway name" value="G alpha (i) signalling events"/>
</dbReference>
<dbReference type="BioGRID-ORCS" id="33007">
    <property type="hits" value="0 hits in 3 CRISPR screens"/>
</dbReference>
<dbReference type="GenomeRNAi" id="33007"/>
<dbReference type="PRO" id="PR:Q8IS44"/>
<dbReference type="Proteomes" id="UP000000803">
    <property type="component" value="Chromosome X"/>
</dbReference>
<dbReference type="Bgee" id="FBgn0053517">
    <property type="expression patterns" value="Expressed in dopaminergic PAM neuron (Drosophila) in brain and 133 other cell types or tissues"/>
</dbReference>
<dbReference type="ExpressionAtlas" id="Q8IS44">
    <property type="expression patterns" value="baseline and differential"/>
</dbReference>
<dbReference type="GO" id="GO:0016020">
    <property type="term" value="C:membrane"/>
    <property type="evidence" value="ECO:0000250"/>
    <property type="project" value="FlyBase"/>
</dbReference>
<dbReference type="GO" id="GO:0005886">
    <property type="term" value="C:plasma membrane"/>
    <property type="evidence" value="ECO:0000318"/>
    <property type="project" value="GO_Central"/>
</dbReference>
<dbReference type="GO" id="GO:0045202">
    <property type="term" value="C:synapse"/>
    <property type="evidence" value="ECO:0007669"/>
    <property type="project" value="GOC"/>
</dbReference>
<dbReference type="GO" id="GO:0001591">
    <property type="term" value="F:dopamine neurotransmitter receptor activity, coupled via Gi/Go"/>
    <property type="evidence" value="ECO:0000314"/>
    <property type="project" value="UniProtKB"/>
</dbReference>
<dbReference type="GO" id="GO:0008227">
    <property type="term" value="F:G protein-coupled amine receptor activity"/>
    <property type="evidence" value="ECO:0000250"/>
    <property type="project" value="FlyBase"/>
</dbReference>
<dbReference type="GO" id="GO:0004930">
    <property type="term" value="F:G protein-coupled receptor activity"/>
    <property type="evidence" value="ECO:0000250"/>
    <property type="project" value="FlyBase"/>
</dbReference>
<dbReference type="GO" id="GO:0007615">
    <property type="term" value="P:anesthesia-resistant memory"/>
    <property type="evidence" value="ECO:0000315"/>
    <property type="project" value="FlyBase"/>
</dbReference>
<dbReference type="GO" id="GO:0007212">
    <property type="term" value="P:G protein-coupled dopamine receptor signaling pathway"/>
    <property type="evidence" value="ECO:0000314"/>
    <property type="project" value="UniProtKB"/>
</dbReference>
<dbReference type="GO" id="GO:0007186">
    <property type="term" value="P:G protein-coupled receptor signaling pathway"/>
    <property type="evidence" value="ECO:0000250"/>
    <property type="project" value="FlyBase"/>
</dbReference>
<dbReference type="CDD" id="cd15053">
    <property type="entry name" value="7tmA_D2-like_dopamine_R"/>
    <property type="match status" value="1"/>
</dbReference>
<dbReference type="FunFam" id="1.20.1070.10:FF:000233">
    <property type="entry name" value="CLUMA_CG012980, isoform A"/>
    <property type="match status" value="1"/>
</dbReference>
<dbReference type="FunFam" id="1.20.1070.10:FF:000247">
    <property type="entry name" value="Uncharacterized protein, isoform B"/>
    <property type="match status" value="1"/>
</dbReference>
<dbReference type="Gene3D" id="1.20.1070.10">
    <property type="entry name" value="Rhodopsin 7-helix transmembrane proteins"/>
    <property type="match status" value="2"/>
</dbReference>
<dbReference type="InterPro" id="IPR000276">
    <property type="entry name" value="GPCR_Rhodpsn"/>
</dbReference>
<dbReference type="InterPro" id="IPR017452">
    <property type="entry name" value="GPCR_Rhodpsn_7TM"/>
</dbReference>
<dbReference type="PANTHER" id="PTHR24248">
    <property type="entry name" value="ADRENERGIC RECEPTOR-RELATED G-PROTEIN COUPLED RECEPTOR"/>
    <property type="match status" value="1"/>
</dbReference>
<dbReference type="PANTHER" id="PTHR24248:SF125">
    <property type="entry name" value="DOPAMINE D2-LIKE RECEPTOR"/>
    <property type="match status" value="1"/>
</dbReference>
<dbReference type="Pfam" id="PF00001">
    <property type="entry name" value="7tm_1"/>
    <property type="match status" value="1"/>
</dbReference>
<dbReference type="PRINTS" id="PR00237">
    <property type="entry name" value="GPCRRHODOPSN"/>
</dbReference>
<dbReference type="SMART" id="SM01381">
    <property type="entry name" value="7TM_GPCR_Srsx"/>
    <property type="match status" value="1"/>
</dbReference>
<dbReference type="SUPFAM" id="SSF81321">
    <property type="entry name" value="Family A G protein-coupled receptor-like"/>
    <property type="match status" value="1"/>
</dbReference>
<dbReference type="PROSITE" id="PS00237">
    <property type="entry name" value="G_PROTEIN_RECEP_F1_1"/>
    <property type="match status" value="1"/>
</dbReference>
<dbReference type="PROSITE" id="PS50262">
    <property type="entry name" value="G_PROTEIN_RECEP_F1_2"/>
    <property type="match status" value="1"/>
</dbReference>
<feature type="chain" id="PRO_0000069395" description="Dopamine D2-like receptor">
    <location>
        <begin position="1"/>
        <end position="905"/>
    </location>
</feature>
<feature type="topological domain" description="Extracellular" evidence="8">
    <location>
        <begin position="1"/>
        <end position="377"/>
    </location>
</feature>
<feature type="transmembrane region" description="Helical; Name=1" evidence="1">
    <location>
        <begin position="378"/>
        <end position="398"/>
    </location>
</feature>
<feature type="topological domain" description="Cytoplasmic" evidence="8">
    <location>
        <begin position="399"/>
        <end position="416"/>
    </location>
</feature>
<feature type="transmembrane region" description="Helical; Name=2" evidence="1">
    <location>
        <begin position="417"/>
        <end position="437"/>
    </location>
</feature>
<feature type="topological domain" description="Extracellular" evidence="8">
    <location>
        <begin position="438"/>
        <end position="450"/>
    </location>
</feature>
<feature type="transmembrane region" description="Helical; Name=3" evidence="1">
    <location>
        <begin position="451"/>
        <end position="471"/>
    </location>
</feature>
<feature type="topological domain" description="Cytoplasmic" evidence="8">
    <location>
        <begin position="472"/>
        <end position="493"/>
    </location>
</feature>
<feature type="transmembrane region" description="Helical; Name=4" evidence="1">
    <location>
        <begin position="494"/>
        <end position="514"/>
    </location>
</feature>
<feature type="topological domain" description="Extracellular" evidence="8">
    <location>
        <begin position="515"/>
        <end position="531"/>
    </location>
</feature>
<feature type="transmembrane region" description="Helical; Name=5" evidence="1">
    <location>
        <begin position="532"/>
        <end position="552"/>
    </location>
</feature>
<feature type="topological domain" description="Cytoplasmic" evidence="8">
    <location>
        <begin position="553"/>
        <end position="830"/>
    </location>
</feature>
<feature type="transmembrane region" description="Helical; Name=6" evidence="1">
    <location>
        <begin position="831"/>
        <end position="851"/>
    </location>
</feature>
<feature type="topological domain" description="Extracellular" evidence="8">
    <location>
        <begin position="852"/>
        <end position="869"/>
    </location>
</feature>
<feature type="transmembrane region" description="Helical; Name=7" evidence="1">
    <location>
        <begin position="870"/>
        <end position="890"/>
    </location>
</feature>
<feature type="topological domain" description="Cytoplasmic" evidence="8">
    <location>
        <begin position="891"/>
        <end position="905"/>
    </location>
</feature>
<feature type="region of interest" description="Disordered" evidence="4">
    <location>
        <begin position="1"/>
        <end position="23"/>
    </location>
</feature>
<feature type="region of interest" description="Disordered" evidence="4">
    <location>
        <begin position="600"/>
        <end position="631"/>
    </location>
</feature>
<feature type="region of interest" description="Disordered" evidence="4">
    <location>
        <begin position="702"/>
        <end position="753"/>
    </location>
</feature>
<feature type="region of interest" description="Disordered" evidence="4">
    <location>
        <begin position="780"/>
        <end position="799"/>
    </location>
</feature>
<feature type="compositionally biased region" description="Low complexity" evidence="4">
    <location>
        <begin position="702"/>
        <end position="722"/>
    </location>
</feature>
<feature type="compositionally biased region" description="Polar residues" evidence="4">
    <location>
        <begin position="723"/>
        <end position="734"/>
    </location>
</feature>
<feature type="compositionally biased region" description="Basic and acidic residues" evidence="4">
    <location>
        <begin position="735"/>
        <end position="746"/>
    </location>
</feature>
<feature type="glycosylation site" description="N-linked (GlcNAc...) asparagine" evidence="2">
    <location>
        <position position="88"/>
    </location>
</feature>
<feature type="glycosylation site" description="N-linked (GlcNAc...) asparagine" evidence="2">
    <location>
        <position position="146"/>
    </location>
</feature>
<feature type="glycosylation site" description="N-linked (GlcNAc...) asparagine" evidence="2">
    <location>
        <position position="156"/>
    </location>
</feature>
<feature type="glycosylation site" description="N-linked (GlcNAc...) asparagine" evidence="2">
    <location>
        <position position="166"/>
    </location>
</feature>
<feature type="glycosylation site" description="N-linked (GlcNAc...) asparagine" evidence="2">
    <location>
        <position position="174"/>
    </location>
</feature>
<feature type="glycosylation site" description="N-linked (GlcNAc...) asparagine" evidence="2">
    <location>
        <position position="257"/>
    </location>
</feature>
<feature type="glycosylation site" description="N-linked (GlcNAc...) asparagine" evidence="2">
    <location>
        <position position="314"/>
    </location>
</feature>
<feature type="glycosylation site" description="N-linked (GlcNAc...) asparagine" evidence="2">
    <location>
        <position position="343"/>
    </location>
</feature>
<feature type="disulfide bond" evidence="3">
    <location>
        <begin position="448"/>
        <end position="525"/>
    </location>
</feature>
<feature type="splice variant" id="VSP_059316" description="In isoform B.">
    <original>MLSPFDWRRGISSSGTGGTMAAQPLSSTAATTAAATGATAATAATAATTSATLSTAAASTSTTAAPSAGATWINHHLAVEADSSQPANGSDAQAGVEGPTMPAGYLPLYEDVETAAEDAGYALIDDISEWLLGSVGSEAAVGGPENSTNLAVTGANGTLAWLEALNSTQPAQSNSSAEDGERGRYSLRSFVEQQLAGGGAAGAGDGGDAGIALIDSGEEAALDNVADAETDYGMLGGFGDAELLQRTATVARETLGNRTAPSTTSYDGGGSGDVGVAGGLAGTAGGGVGGAGGSGGSTFMLLLENFNDYFPNYNGSTVSGTSTIAPGVAITGSRGSGLLLEQNLTGLYLDGYRLNCTNETLNLTDSCGELRVVDHNYWALILILFPILTLFGNILVILSVCRERSLQTVTNYFIVSLAIADLLVAVVVMPFAVYFL</original>
    <variation>MSAPK</variation>
    <location>
        <begin position="1"/>
        <end position="436"/>
    </location>
</feature>
<feature type="splice variant" id="VSP_059317" description="In isoform F.">
    <original>NSVVAQITTQPQLVVADPNGNHDSGYAASNVDDVLAGVAPASASAATSAAPRSSGSPPDSPLPSGATLQRSSVSSQRRPTGDDSPKRGEPALRSVGVDNSSVAMKPLSFVRYGVQEAMTLARNDSTLSTTSKTSSRKDKKNSQASR</original>
    <variation>K</variation>
    <location>
        <begin position="657"/>
        <end position="802"/>
    </location>
</feature>
<feature type="splice variant" id="VSP_059318" description="In isoform J.">
    <location>
        <begin position="658"/>
        <end position="757"/>
    </location>
</feature>
<feature type="splice variant" id="VSP_059319" description="In isoform I.">
    <location>
        <position position="658"/>
    </location>
</feature>
<feature type="splice variant" id="VSP_059320" description="In isoform G and isoform B.">
    <location>
        <begin position="749"/>
        <end position="756"/>
    </location>
</feature>
<feature type="sequence conflict" description="In Ref. 1; AAN15955." evidence="8" ref="1">
    <original>D</original>
    <variation>E</variation>
    <location>
        <position position="739"/>
    </location>
</feature>
<evidence type="ECO:0000255" key="1"/>
<evidence type="ECO:0000255" key="2">
    <source>
        <dbReference type="PROSITE-ProRule" id="PRU00498"/>
    </source>
</evidence>
<evidence type="ECO:0000255" key="3">
    <source>
        <dbReference type="PROSITE-ProRule" id="PRU00521"/>
    </source>
</evidence>
<evidence type="ECO:0000256" key="4">
    <source>
        <dbReference type="SAM" id="MobiDB-lite"/>
    </source>
</evidence>
<evidence type="ECO:0000269" key="5">
    <source>
    </source>
</evidence>
<evidence type="ECO:0000269" key="6">
    <source>
    </source>
</evidence>
<evidence type="ECO:0000303" key="7">
    <source>
    </source>
</evidence>
<evidence type="ECO:0000305" key="8"/>
<evidence type="ECO:0000312" key="9">
    <source>
        <dbReference type="EMBL" id="AAN15955.1"/>
    </source>
</evidence>
<evidence type="ECO:0000312" key="10">
    <source>
        <dbReference type="FlyBase" id="FBgn0053517"/>
    </source>
</evidence>
<keyword id="KW-0025">Alternative splicing</keyword>
<keyword id="KW-1003">Cell membrane</keyword>
<keyword id="KW-1015">Disulfide bond</keyword>
<keyword id="KW-0297">G-protein coupled receptor</keyword>
<keyword id="KW-0325">Glycoprotein</keyword>
<keyword id="KW-0472">Membrane</keyword>
<keyword id="KW-0675">Receptor</keyword>
<keyword id="KW-1185">Reference proteome</keyword>
<keyword id="KW-0807">Transducer</keyword>
<keyword id="KW-0812">Transmembrane</keyword>
<keyword id="KW-1133">Transmembrane helix</keyword>
<reference evidence="8" key="1">
    <citation type="journal article" date="2000" name="Science">
        <title>The genome sequence of Drosophila melanogaster.</title>
        <authorList>
            <person name="Adams M.D."/>
            <person name="Celniker S.E."/>
            <person name="Holt R.A."/>
            <person name="Evans C.A."/>
            <person name="Gocayne J.D."/>
            <person name="Amanatides P.G."/>
            <person name="Scherer S.E."/>
            <person name="Li P.W."/>
            <person name="Hoskins R.A."/>
            <person name="Galle R.F."/>
            <person name="George R.A."/>
            <person name="Lewis S.E."/>
            <person name="Richards S."/>
            <person name="Ashburner M."/>
            <person name="Henderson S.N."/>
            <person name="Sutton G.G."/>
            <person name="Wortman J.R."/>
            <person name="Yandell M.D."/>
            <person name="Zhang Q."/>
            <person name="Chen L.X."/>
            <person name="Brandon R.C."/>
            <person name="Rogers Y.-H.C."/>
            <person name="Blazej R.G."/>
            <person name="Champe M."/>
            <person name="Pfeiffer B.D."/>
            <person name="Wan K.H."/>
            <person name="Doyle C."/>
            <person name="Baxter E.G."/>
            <person name="Helt G."/>
            <person name="Nelson C.R."/>
            <person name="Miklos G.L.G."/>
            <person name="Abril J.F."/>
            <person name="Agbayani A."/>
            <person name="An H.-J."/>
            <person name="Andrews-Pfannkoch C."/>
            <person name="Baldwin D."/>
            <person name="Ballew R.M."/>
            <person name="Basu A."/>
            <person name="Baxendale J."/>
            <person name="Bayraktaroglu L."/>
            <person name="Beasley E.M."/>
            <person name="Beeson K.Y."/>
            <person name="Benos P.V."/>
            <person name="Berman B.P."/>
            <person name="Bhandari D."/>
            <person name="Bolshakov S."/>
            <person name="Borkova D."/>
            <person name="Botchan M.R."/>
            <person name="Bouck J."/>
            <person name="Brokstein P."/>
            <person name="Brottier P."/>
            <person name="Burtis K.C."/>
            <person name="Busam D.A."/>
            <person name="Butler H."/>
            <person name="Cadieu E."/>
            <person name="Center A."/>
            <person name="Chandra I."/>
            <person name="Cherry J.M."/>
            <person name="Cawley S."/>
            <person name="Dahlke C."/>
            <person name="Davenport L.B."/>
            <person name="Davies P."/>
            <person name="de Pablos B."/>
            <person name="Delcher A."/>
            <person name="Deng Z."/>
            <person name="Mays A.D."/>
            <person name="Dew I."/>
            <person name="Dietz S.M."/>
            <person name="Dodson K."/>
            <person name="Doup L.E."/>
            <person name="Downes M."/>
            <person name="Dugan-Rocha S."/>
            <person name="Dunkov B.C."/>
            <person name="Dunn P."/>
            <person name="Durbin K.J."/>
            <person name="Evangelista C.C."/>
            <person name="Ferraz C."/>
            <person name="Ferriera S."/>
            <person name="Fleischmann W."/>
            <person name="Fosler C."/>
            <person name="Gabrielian A.E."/>
            <person name="Garg N.S."/>
            <person name="Gelbart W.M."/>
            <person name="Glasser K."/>
            <person name="Glodek A."/>
            <person name="Gong F."/>
            <person name="Gorrell J.H."/>
            <person name="Gu Z."/>
            <person name="Guan P."/>
            <person name="Harris M."/>
            <person name="Harris N.L."/>
            <person name="Harvey D.A."/>
            <person name="Heiman T.J."/>
            <person name="Hernandez J.R."/>
            <person name="Houck J."/>
            <person name="Hostin D."/>
            <person name="Houston K.A."/>
            <person name="Howland T.J."/>
            <person name="Wei M.-H."/>
            <person name="Ibegwam C."/>
            <person name="Jalali M."/>
            <person name="Kalush F."/>
            <person name="Karpen G.H."/>
            <person name="Ke Z."/>
            <person name="Kennison J.A."/>
            <person name="Ketchum K.A."/>
            <person name="Kimmel B.E."/>
            <person name="Kodira C.D."/>
            <person name="Kraft C.L."/>
            <person name="Kravitz S."/>
            <person name="Kulp D."/>
            <person name="Lai Z."/>
            <person name="Lasko P."/>
            <person name="Lei Y."/>
            <person name="Levitsky A.A."/>
            <person name="Li J.H."/>
            <person name="Li Z."/>
            <person name="Liang Y."/>
            <person name="Lin X."/>
            <person name="Liu X."/>
            <person name="Mattei B."/>
            <person name="McIntosh T.C."/>
            <person name="McLeod M.P."/>
            <person name="McPherson D."/>
            <person name="Merkulov G."/>
            <person name="Milshina N.V."/>
            <person name="Mobarry C."/>
            <person name="Morris J."/>
            <person name="Moshrefi A."/>
            <person name="Mount S.M."/>
            <person name="Moy M."/>
            <person name="Murphy B."/>
            <person name="Murphy L."/>
            <person name="Muzny D.M."/>
            <person name="Nelson D.L."/>
            <person name="Nelson D.R."/>
            <person name="Nelson K.A."/>
            <person name="Nixon K."/>
            <person name="Nusskern D.R."/>
            <person name="Pacleb J.M."/>
            <person name="Palazzolo M."/>
            <person name="Pittman G.S."/>
            <person name="Pan S."/>
            <person name="Pollard J."/>
            <person name="Puri V."/>
            <person name="Reese M.G."/>
            <person name="Reinert K."/>
            <person name="Remington K."/>
            <person name="Saunders R.D.C."/>
            <person name="Scheeler F."/>
            <person name="Shen H."/>
            <person name="Shue B.C."/>
            <person name="Siden-Kiamos I."/>
            <person name="Simpson M."/>
            <person name="Skupski M.P."/>
            <person name="Smith T.J."/>
            <person name="Spier E."/>
            <person name="Spradling A.C."/>
            <person name="Stapleton M."/>
            <person name="Strong R."/>
            <person name="Sun E."/>
            <person name="Svirskas R."/>
            <person name="Tector C."/>
            <person name="Turner R."/>
            <person name="Venter E."/>
            <person name="Wang A.H."/>
            <person name="Wang X."/>
            <person name="Wang Z.-Y."/>
            <person name="Wassarman D.A."/>
            <person name="Weinstock G.M."/>
            <person name="Weissenbach J."/>
            <person name="Williams S.M."/>
            <person name="Woodage T."/>
            <person name="Worley K.C."/>
            <person name="Wu D."/>
            <person name="Yang S."/>
            <person name="Yao Q.A."/>
            <person name="Ye J."/>
            <person name="Yeh R.-F."/>
            <person name="Zaveri J.S."/>
            <person name="Zhan M."/>
            <person name="Zhang G."/>
            <person name="Zhao Q."/>
            <person name="Zheng L."/>
            <person name="Zheng X.H."/>
            <person name="Zhong F.N."/>
            <person name="Zhong W."/>
            <person name="Zhou X."/>
            <person name="Zhu S.C."/>
            <person name="Zhu X."/>
            <person name="Smith H.O."/>
            <person name="Gibbs R.A."/>
            <person name="Myers E.W."/>
            <person name="Rubin G.M."/>
            <person name="Venter J.C."/>
        </authorList>
    </citation>
    <scope>NUCLEOTIDE SEQUENCE [LARGE SCALE GENOMIC DNA]</scope>
    <source>
        <strain evidence="5">Berkeley</strain>
    </source>
</reference>
<reference evidence="8" key="2">
    <citation type="journal article" date="2002" name="Genome Biol.">
        <title>Annotation of the Drosophila melanogaster euchromatic genome: a systematic review.</title>
        <authorList>
            <person name="Misra S."/>
            <person name="Crosby M.A."/>
            <person name="Mungall C.J."/>
            <person name="Matthews B.B."/>
            <person name="Campbell K.S."/>
            <person name="Hradecky P."/>
            <person name="Huang Y."/>
            <person name="Kaminker J.S."/>
            <person name="Millburn G.H."/>
            <person name="Prochnik S.E."/>
            <person name="Smith C.D."/>
            <person name="Tupy J.L."/>
            <person name="Whitfield E.J."/>
            <person name="Bayraktaroglu L."/>
            <person name="Berman B.P."/>
            <person name="Bettencourt B.R."/>
            <person name="Celniker S.E."/>
            <person name="de Grey A.D.N.J."/>
            <person name="Drysdale R.A."/>
            <person name="Harris N.L."/>
            <person name="Richter J."/>
            <person name="Russo S."/>
            <person name="Schroeder A.J."/>
            <person name="Shu S.Q."/>
            <person name="Stapleton M."/>
            <person name="Yamada C."/>
            <person name="Ashburner M."/>
            <person name="Gelbart W.M."/>
            <person name="Rubin G.M."/>
            <person name="Lewis S.E."/>
        </authorList>
    </citation>
    <scope>GENOME REANNOTATION</scope>
    <source>
        <strain>Berkeley</strain>
    </source>
</reference>
<reference key="3">
    <citation type="submission" date="2004-08" db="EMBL/GenBank/DDBJ databases">
        <authorList>
            <person name="Stapleton M."/>
            <person name="Carlson J.W."/>
            <person name="Chavez C."/>
            <person name="Frise E."/>
            <person name="George R.A."/>
            <person name="Pacleb J.M."/>
            <person name="Park S."/>
            <person name="Wan K.H."/>
            <person name="Yu C."/>
            <person name="Rubin G.M."/>
            <person name="Celniker S.E."/>
        </authorList>
    </citation>
    <scope>NUCLEOTIDE SEQUENCE [LARGE SCALE MRNA] (ISOFORM B)</scope>
    <source>
        <strain>Berkeley</strain>
        <tissue>Embryo</tissue>
    </source>
</reference>
<reference evidence="8" key="4">
    <citation type="journal article" date="2002" name="Proc. Natl. Acad. Sci. U.S.A.">
        <title>A Drosophila dopamine 2-like receptor: molecular characterization and identification of multiple alternatively spliced variants.</title>
        <authorList>
            <person name="Hearn M.G."/>
            <person name="Ren Y."/>
            <person name="McBride E.W."/>
            <person name="Reveillaud I."/>
            <person name="Beinborn M."/>
            <person name="Kopin A.S."/>
        </authorList>
    </citation>
    <scope>NUCLEOTIDE SEQUENCE [MRNA] OF 238-905 (ISOFORMS H; F AND J)</scope>
    <scope>FUNCTION</scope>
    <scope>SUBCELLULAR LOCATION</scope>
    <scope>TISSUE SPECIFICITY</scope>
    <scope>DEVELOPMENTAL STAGE</scope>
    <source>
        <tissue evidence="6">Head</tissue>
    </source>
</reference>
<accession>Q8IS44</accession>
<accession>Q4ABK5</accession>
<accession>Q59E80</accession>
<accession>Q59E81</accession>
<accession>Q59E82</accession>
<accession>Q6AWL2</accession>
<accession>Q8IS43</accession>
<accession>Q8IS45</accession>
<accession>Q9W5X7</accession>
<accession>Q9W5X8</accession>
<accession>X2JLE1</accession>
<name>DRD2L_DROME</name>
<organism evidence="9">
    <name type="scientific">Drosophila melanogaster</name>
    <name type="common">Fruit fly</name>
    <dbReference type="NCBI Taxonomy" id="7227"/>
    <lineage>
        <taxon>Eukaryota</taxon>
        <taxon>Metazoa</taxon>
        <taxon>Ecdysozoa</taxon>
        <taxon>Arthropoda</taxon>
        <taxon>Hexapoda</taxon>
        <taxon>Insecta</taxon>
        <taxon>Pterygota</taxon>
        <taxon>Neoptera</taxon>
        <taxon>Endopterygota</taxon>
        <taxon>Diptera</taxon>
        <taxon>Brachycera</taxon>
        <taxon>Muscomorpha</taxon>
        <taxon>Ephydroidea</taxon>
        <taxon>Drosophilidae</taxon>
        <taxon>Drosophila</taxon>
        <taxon>Sophophora</taxon>
    </lineage>
</organism>
<comment type="function">
    <text evidence="6">Receptor for dopamine. The activity of this receptor is mediated by G proteins which inhibit adenylyl cyclase.</text>
</comment>
<comment type="subcellular location">
    <subcellularLocation>
        <location evidence="6">Cell membrane</location>
        <topology evidence="1">Multi-pass membrane protein</topology>
    </subcellularLocation>
</comment>
<comment type="alternative products">
    <event type="alternative splicing"/>
    <isoform>
        <id>Q8IS44-1</id>
        <name evidence="10">H</name>
        <name evidence="7">606</name>
        <name evidence="7">DD2R-606</name>
        <sequence type="displayed"/>
    </isoform>
    <isoform>
        <id>Q8IS44-2</id>
        <name evidence="10">J</name>
        <name evidence="7">506</name>
        <name evidence="7">DD2R-506</name>
        <sequence type="described" ref="VSP_059318"/>
    </isoform>
    <isoform>
        <id>Q8IS44-3</id>
        <name evidence="10">F</name>
        <name evidence="7">461</name>
        <name evidence="7">DD2R-461</name>
        <sequence type="described" ref="VSP_059317"/>
    </isoform>
    <isoform>
        <id>Q8IS44-4</id>
        <name evidence="10">B</name>
        <sequence type="described" ref="VSP_059316 VSP_059320"/>
    </isoform>
    <isoform>
        <id>Q8IS44-5</id>
        <name evidence="10">G</name>
        <sequence type="described" ref="VSP_059320"/>
    </isoform>
    <isoform>
        <id>Q8IS44-6</id>
        <name evidence="10">I</name>
        <sequence type="described" ref="VSP_059319"/>
    </isoform>
</comment>
<comment type="tissue specificity">
    <text evidence="6">Highest expression is in adult heads.</text>
</comment>
<comment type="developmental stage">
    <text evidence="6">Expressed in larva, pupae and adult.</text>
</comment>
<comment type="similarity">
    <text evidence="3">Belongs to the G-protein coupled receptor 1 family.</text>
</comment>
<comment type="sequence caution" evidence="8">
    <conflict type="erroneous initiation">
        <sequence resource="EMBL-CDS" id="AAN15955"/>
    </conflict>
    <text>Truncated N-terminus.</text>
</comment>
<comment type="sequence caution" evidence="8">
    <conflict type="erroneous initiation">
        <sequence resource="EMBL-CDS" id="AAN15956"/>
    </conflict>
    <text>Truncated N-terminus.</text>
</comment>
<comment type="sequence caution" evidence="8">
    <conflict type="erroneous initiation">
        <sequence resource="EMBL-CDS" id="AAN15957"/>
    </conflict>
    <text>Truncated N-terminus.</text>
</comment>
<comment type="sequence caution" evidence="8">
    <conflict type="frameshift">
        <sequence resource="EMBL-CDS" id="AAT94465"/>
    </conflict>
</comment>
<protein>
    <recommendedName>
        <fullName>Dopamine D2-like receptor</fullName>
        <shortName>DD2R</shortName>
    </recommendedName>
</protein>
<sequence length="905" mass="95057">MLSPFDWRRGISSSGTGGTMAAQPLSSTAATTAAATGATAATAATAATTSATLSTAAASTSTTAAPSAGATWINHHLAVEADSSQPANGSDAQAGVEGPTMPAGYLPLYEDVETAAEDAGYALIDDISEWLLGSVGSEAAVGGPENSTNLAVTGANGTLAWLEALNSTQPAQSNSSAEDGERGRYSLRSFVEQQLAGGGAAGAGDGGDAGIALIDSGEEAALDNVADAETDYGMLGGFGDAELLQRTATVARETLGNRTAPSTTSYDGGGSGDVGVAGGLAGTAGGGVGGAGGSGGSTFMLLLENFNDYFPNYNGSTVSGTSTIAPGVAITGSRGSGLLLEQNLTGLYLDGYRLNCTNETLNLTDSCGELRVVDHNYWALILILFPILTLFGNILVILSVCRERSLQTVTNYFIVSLAIADLLVAVVVMPFAVYFLVNGAWALPDVVCDFYIAMDVICSTSSIFNLVAISIDRYIAVTQPIKYAKHKNSRRVCLTILLVWAISAAIGSPIVLGLNNTPNREPDVCAFYNADFILYSSLSSFYIPCIIMVFLYWNIFKALRSRARKQRAARKPHLSELTGGSVIENIAQTRRLAETALDSSRHASRILPDEAATNTASGSNEEEDENAISPDIDDCHVIVNDKSTEFMLATVVEETGNSVVAQITTQPQLVVADPNGNHDSGYAASNVDDVLAGVAPASASAATSAAPRSSGSPPDSPLPSGATLQRSSVSSQRRPTGDDSPKRGEPALRSVGVDNSSVAMKPLSFVRYGVQEAMTLARNDSTLSTTSKTSSRKDKKNSQASRFTIYKVHKASKKKREKSSAKKERKATKTLAIVLGVFLFCWLPFFSCNIMDAMCAKFKKDCRPGLTAYMMTTWLGYINSFVNPVIYTIFNPEFRKAFKKIMHMG</sequence>
<gene>
    <name evidence="10" type="primary">Dop2R</name>
    <name type="synonym">D2R</name>
    <name evidence="10" type="ORF">CG17004</name>
</gene>
<proteinExistence type="evidence at transcript level"/>